<name>UVRC_FRATO</name>
<proteinExistence type="inferred from homology"/>
<sequence length="612" mass="70293">MIVDNSKDFDLKSFLANLTTHSGVYRMLDKHGEIIYVGKAKNLKNRINSYFSKGAKDSKTLMMVEQIARIEITITPSDYEAYLLENNLIKQHRPKYNILFKDDKSYPYLVISRDKFPRVSFYRGKSAYKKGQCFGPYVSISSVKNTLNTIQKIFPIRQCENSYYKSRVRPCLQYQIKRCLAPCVGLVSQQQYDEQLAILKKFLAGKFSSVLEEISAKMYQASEDMEYEKAQVYRDQLVVLRKLQQQQIVDIQEDKTFDVIGIYMQDSYASIALLQIQNGDVVADRHWSIDAKGQDKTSIMHAFLSHFYLGDEIRNIWPKNIILSKVEFADITDLMNSISQKIGQAINWIIAPAADNLKWLKLAEVNARQKLNIYTSSKSQYQKRLESLKEFLESEKDIKRIECFDISHFQGEATIASCVVYTDDGEDRKSHRRYNIKDIKSGDDYAAIHQAVSRRVSSGLEADNLPDVMIIDGGKGQIHQAEAVFREYGIQDKVQLVSLGKGVERISGKEKIYKGFDDTEYTLDEHNPGFLLLRQVRDSAHDHAIKGQRKKVSANRQSSIIEEIEGVGPKRRKALMMYFGGWQELSRASVDEIAKVKGISKKLAQEIWECFH</sequence>
<comment type="function">
    <text evidence="1">The UvrABC repair system catalyzes the recognition and processing of DNA lesions. UvrC both incises the 5' and 3' sides of the lesion. The N-terminal half is responsible for the 3' incision and the C-terminal half is responsible for the 5' incision.</text>
</comment>
<comment type="subunit">
    <text evidence="1">Interacts with UvrB in an incision complex.</text>
</comment>
<comment type="subcellular location">
    <subcellularLocation>
        <location evidence="1">Cytoplasm</location>
    </subcellularLocation>
</comment>
<comment type="similarity">
    <text evidence="1">Belongs to the UvrC family.</text>
</comment>
<keyword id="KW-0963">Cytoplasm</keyword>
<keyword id="KW-0227">DNA damage</keyword>
<keyword id="KW-0228">DNA excision</keyword>
<keyword id="KW-0234">DNA repair</keyword>
<keyword id="KW-0267">Excision nuclease</keyword>
<keyword id="KW-0742">SOS response</keyword>
<reference key="1">
    <citation type="journal article" date="2006" name="J. Bacteriol.">
        <title>Chromosome rearrangement and diversification of Francisella tularensis revealed by the type B (OSU18) genome sequence.</title>
        <authorList>
            <person name="Petrosino J.F."/>
            <person name="Xiang Q."/>
            <person name="Karpathy S.E."/>
            <person name="Jiang H."/>
            <person name="Yerrapragada S."/>
            <person name="Liu Y."/>
            <person name="Gioia J."/>
            <person name="Hemphill L."/>
            <person name="Gonzalez A."/>
            <person name="Raghavan T.M."/>
            <person name="Uzman A."/>
            <person name="Fox G.E."/>
            <person name="Highlander S."/>
            <person name="Reichard M."/>
            <person name="Morton R.J."/>
            <person name="Clinkenbeard K.D."/>
            <person name="Weinstock G.M."/>
        </authorList>
    </citation>
    <scope>NUCLEOTIDE SEQUENCE [LARGE SCALE GENOMIC DNA]</scope>
    <source>
        <strain>OSU18</strain>
    </source>
</reference>
<gene>
    <name evidence="1" type="primary">uvrC</name>
    <name type="ordered locus">FTH_1410</name>
</gene>
<accession>Q0BL07</accession>
<evidence type="ECO:0000255" key="1">
    <source>
        <dbReference type="HAMAP-Rule" id="MF_00203"/>
    </source>
</evidence>
<organism>
    <name type="scientific">Francisella tularensis subsp. holarctica (strain OSU18)</name>
    <dbReference type="NCBI Taxonomy" id="393011"/>
    <lineage>
        <taxon>Bacteria</taxon>
        <taxon>Pseudomonadati</taxon>
        <taxon>Pseudomonadota</taxon>
        <taxon>Gammaproteobacteria</taxon>
        <taxon>Thiotrichales</taxon>
        <taxon>Francisellaceae</taxon>
        <taxon>Francisella</taxon>
    </lineage>
</organism>
<dbReference type="EMBL" id="CP000437">
    <property type="protein sequence ID" value="ABI83227.1"/>
    <property type="molecule type" value="Genomic_DNA"/>
</dbReference>
<dbReference type="RefSeq" id="WP_011648741.1">
    <property type="nucleotide sequence ID" value="NC_017463.1"/>
</dbReference>
<dbReference type="SMR" id="Q0BL07"/>
<dbReference type="KEGG" id="fth:FTH_1410"/>
<dbReference type="GO" id="GO:0005737">
    <property type="term" value="C:cytoplasm"/>
    <property type="evidence" value="ECO:0007669"/>
    <property type="project" value="UniProtKB-SubCell"/>
</dbReference>
<dbReference type="GO" id="GO:0009380">
    <property type="term" value="C:excinuclease repair complex"/>
    <property type="evidence" value="ECO:0007669"/>
    <property type="project" value="InterPro"/>
</dbReference>
<dbReference type="GO" id="GO:0003677">
    <property type="term" value="F:DNA binding"/>
    <property type="evidence" value="ECO:0007669"/>
    <property type="project" value="UniProtKB-UniRule"/>
</dbReference>
<dbReference type="GO" id="GO:0009381">
    <property type="term" value="F:excinuclease ABC activity"/>
    <property type="evidence" value="ECO:0007669"/>
    <property type="project" value="UniProtKB-UniRule"/>
</dbReference>
<dbReference type="GO" id="GO:0006289">
    <property type="term" value="P:nucleotide-excision repair"/>
    <property type="evidence" value="ECO:0007669"/>
    <property type="project" value="UniProtKB-UniRule"/>
</dbReference>
<dbReference type="GO" id="GO:0009432">
    <property type="term" value="P:SOS response"/>
    <property type="evidence" value="ECO:0007669"/>
    <property type="project" value="UniProtKB-UniRule"/>
</dbReference>
<dbReference type="CDD" id="cd10434">
    <property type="entry name" value="GIY-YIG_UvrC_Cho"/>
    <property type="match status" value="1"/>
</dbReference>
<dbReference type="FunFam" id="3.30.420.340:FF:000001">
    <property type="entry name" value="UvrABC system protein C"/>
    <property type="match status" value="1"/>
</dbReference>
<dbReference type="FunFam" id="3.40.1440.10:FF:000001">
    <property type="entry name" value="UvrABC system protein C"/>
    <property type="match status" value="1"/>
</dbReference>
<dbReference type="Gene3D" id="1.10.150.20">
    <property type="entry name" value="5' to 3' exonuclease, C-terminal subdomain"/>
    <property type="match status" value="1"/>
</dbReference>
<dbReference type="Gene3D" id="3.40.1440.10">
    <property type="entry name" value="GIY-YIG endonuclease"/>
    <property type="match status" value="1"/>
</dbReference>
<dbReference type="Gene3D" id="4.10.860.10">
    <property type="entry name" value="UVR domain"/>
    <property type="match status" value="1"/>
</dbReference>
<dbReference type="Gene3D" id="3.30.420.340">
    <property type="entry name" value="UvrC, RNAse H endonuclease domain"/>
    <property type="match status" value="1"/>
</dbReference>
<dbReference type="HAMAP" id="MF_00203">
    <property type="entry name" value="UvrC"/>
    <property type="match status" value="1"/>
</dbReference>
<dbReference type="InterPro" id="IPR000305">
    <property type="entry name" value="GIY-YIG_endonuc"/>
</dbReference>
<dbReference type="InterPro" id="IPR035901">
    <property type="entry name" value="GIY-YIG_endonuc_sf"/>
</dbReference>
<dbReference type="InterPro" id="IPR047296">
    <property type="entry name" value="GIY-YIG_UvrC_Cho"/>
</dbReference>
<dbReference type="InterPro" id="IPR010994">
    <property type="entry name" value="RuvA_2-like"/>
</dbReference>
<dbReference type="InterPro" id="IPR001943">
    <property type="entry name" value="UVR_dom"/>
</dbReference>
<dbReference type="InterPro" id="IPR036876">
    <property type="entry name" value="UVR_dom_sf"/>
</dbReference>
<dbReference type="InterPro" id="IPR050066">
    <property type="entry name" value="UvrABC_protein_C"/>
</dbReference>
<dbReference type="InterPro" id="IPR004791">
    <property type="entry name" value="UvrC"/>
</dbReference>
<dbReference type="InterPro" id="IPR001162">
    <property type="entry name" value="UvrC_RNase_H_dom"/>
</dbReference>
<dbReference type="InterPro" id="IPR038476">
    <property type="entry name" value="UvrC_RNase_H_dom_sf"/>
</dbReference>
<dbReference type="NCBIfam" id="TIGR00194">
    <property type="entry name" value="uvrC"/>
    <property type="match status" value="1"/>
</dbReference>
<dbReference type="PANTHER" id="PTHR30562:SF1">
    <property type="entry name" value="UVRABC SYSTEM PROTEIN C"/>
    <property type="match status" value="1"/>
</dbReference>
<dbReference type="PANTHER" id="PTHR30562">
    <property type="entry name" value="UVRC/OXIDOREDUCTASE"/>
    <property type="match status" value="1"/>
</dbReference>
<dbReference type="Pfam" id="PF01541">
    <property type="entry name" value="GIY-YIG"/>
    <property type="match status" value="1"/>
</dbReference>
<dbReference type="Pfam" id="PF14520">
    <property type="entry name" value="HHH_5"/>
    <property type="match status" value="1"/>
</dbReference>
<dbReference type="Pfam" id="PF02151">
    <property type="entry name" value="UVR"/>
    <property type="match status" value="1"/>
</dbReference>
<dbReference type="Pfam" id="PF22920">
    <property type="entry name" value="UvrC_RNaseH"/>
    <property type="match status" value="1"/>
</dbReference>
<dbReference type="Pfam" id="PF08459">
    <property type="entry name" value="UvrC_RNaseH_dom"/>
    <property type="match status" value="1"/>
</dbReference>
<dbReference type="SMART" id="SM00465">
    <property type="entry name" value="GIYc"/>
    <property type="match status" value="1"/>
</dbReference>
<dbReference type="SUPFAM" id="SSF46600">
    <property type="entry name" value="C-terminal UvrC-binding domain of UvrB"/>
    <property type="match status" value="1"/>
</dbReference>
<dbReference type="SUPFAM" id="SSF82771">
    <property type="entry name" value="GIY-YIG endonuclease"/>
    <property type="match status" value="1"/>
</dbReference>
<dbReference type="SUPFAM" id="SSF47781">
    <property type="entry name" value="RuvA domain 2-like"/>
    <property type="match status" value="1"/>
</dbReference>
<dbReference type="PROSITE" id="PS50164">
    <property type="entry name" value="GIY_YIG"/>
    <property type="match status" value="1"/>
</dbReference>
<dbReference type="PROSITE" id="PS50151">
    <property type="entry name" value="UVR"/>
    <property type="match status" value="1"/>
</dbReference>
<dbReference type="PROSITE" id="PS50165">
    <property type="entry name" value="UVRC"/>
    <property type="match status" value="1"/>
</dbReference>
<protein>
    <recommendedName>
        <fullName evidence="1">UvrABC system protein C</fullName>
        <shortName evidence="1">Protein UvrC</shortName>
    </recommendedName>
    <alternativeName>
        <fullName evidence="1">Excinuclease ABC subunit C</fullName>
    </alternativeName>
</protein>
<feature type="chain" id="PRO_0000264893" description="UvrABC system protein C">
    <location>
        <begin position="1"/>
        <end position="612"/>
    </location>
</feature>
<feature type="domain" description="GIY-YIG" evidence="1">
    <location>
        <begin position="20"/>
        <end position="98"/>
    </location>
</feature>
<feature type="domain" description="UVR" evidence="1">
    <location>
        <begin position="208"/>
        <end position="243"/>
    </location>
</feature>